<proteinExistence type="inferred from homology"/>
<protein>
    <recommendedName>
        <fullName evidence="1">Ribonuclease H</fullName>
        <shortName evidence="1">RNase H</shortName>
        <ecNumber evidence="1">3.1.26.4</ecNumber>
    </recommendedName>
</protein>
<name>RNH_VIBC1</name>
<feature type="chain" id="PRO_1000074683" description="Ribonuclease H">
    <location>
        <begin position="1"/>
        <end position="154"/>
    </location>
</feature>
<feature type="domain" description="RNase H type-1" evidence="2">
    <location>
        <begin position="1"/>
        <end position="142"/>
    </location>
</feature>
<feature type="binding site" evidence="1">
    <location>
        <position position="10"/>
    </location>
    <ligand>
        <name>Mg(2+)</name>
        <dbReference type="ChEBI" id="CHEBI:18420"/>
        <label>1</label>
    </ligand>
</feature>
<feature type="binding site" evidence="1">
    <location>
        <position position="10"/>
    </location>
    <ligand>
        <name>Mg(2+)</name>
        <dbReference type="ChEBI" id="CHEBI:18420"/>
        <label>2</label>
    </ligand>
</feature>
<feature type="binding site" evidence="1">
    <location>
        <position position="48"/>
    </location>
    <ligand>
        <name>Mg(2+)</name>
        <dbReference type="ChEBI" id="CHEBI:18420"/>
        <label>1</label>
    </ligand>
</feature>
<feature type="binding site" evidence="1">
    <location>
        <position position="70"/>
    </location>
    <ligand>
        <name>Mg(2+)</name>
        <dbReference type="ChEBI" id="CHEBI:18420"/>
        <label>1</label>
    </ligand>
</feature>
<feature type="binding site" evidence="1">
    <location>
        <position position="134"/>
    </location>
    <ligand>
        <name>Mg(2+)</name>
        <dbReference type="ChEBI" id="CHEBI:18420"/>
        <label>2</label>
    </ligand>
</feature>
<accession>A7MY21</accession>
<sequence length="154" mass="17454">MTKHVEIFTDGSCLGNPGPGGYGIVLRYKQTEKTLAKGYTLTTNNRMEMLAAVVALQTLKEPCQVTLTTDSQYVRQGITQWIHNWKKRGWKTADKKPVKNADLWQALDKETARHKVDWHWVKGHAGHRENEICDELARTAAENPTEEDTGYQAS</sequence>
<gene>
    <name evidence="1" type="primary">rnhA</name>
    <name type="ordered locus">VIBHAR_03211</name>
</gene>
<reference key="1">
    <citation type="submission" date="2007-08" db="EMBL/GenBank/DDBJ databases">
        <authorList>
            <consortium name="The Vibrio harveyi Genome Sequencing Project"/>
            <person name="Bassler B."/>
            <person name="Clifton S.W."/>
            <person name="Fulton L."/>
            <person name="Delehaunty K."/>
            <person name="Fronick C."/>
            <person name="Harrison M."/>
            <person name="Markivic C."/>
            <person name="Fulton R."/>
            <person name="Tin-Wollam A.-M."/>
            <person name="Shah N."/>
            <person name="Pepin K."/>
            <person name="Nash W."/>
            <person name="Thiruvilangam P."/>
            <person name="Bhonagiri V."/>
            <person name="Waters C."/>
            <person name="Tu K.C."/>
            <person name="Irgon J."/>
            <person name="Wilson R.K."/>
        </authorList>
    </citation>
    <scope>NUCLEOTIDE SEQUENCE [LARGE SCALE GENOMIC DNA]</scope>
    <source>
        <strain>ATCC BAA-1116 / BB120</strain>
    </source>
</reference>
<dbReference type="EC" id="3.1.26.4" evidence="1"/>
<dbReference type="EMBL" id="CP000789">
    <property type="protein sequence ID" value="ABU72160.1"/>
    <property type="molecule type" value="Genomic_DNA"/>
</dbReference>
<dbReference type="RefSeq" id="WP_005533940.1">
    <property type="nucleotide sequence ID" value="NC_022269.1"/>
</dbReference>
<dbReference type="SMR" id="A7MY21"/>
<dbReference type="KEGG" id="vha:VIBHAR_03211"/>
<dbReference type="PATRIC" id="fig|338187.25.peg.2978"/>
<dbReference type="Proteomes" id="UP000008152">
    <property type="component" value="Chromosome I"/>
</dbReference>
<dbReference type="GO" id="GO:0005737">
    <property type="term" value="C:cytoplasm"/>
    <property type="evidence" value="ECO:0007669"/>
    <property type="project" value="UniProtKB-SubCell"/>
</dbReference>
<dbReference type="GO" id="GO:0000287">
    <property type="term" value="F:magnesium ion binding"/>
    <property type="evidence" value="ECO:0007669"/>
    <property type="project" value="UniProtKB-UniRule"/>
</dbReference>
<dbReference type="GO" id="GO:0003676">
    <property type="term" value="F:nucleic acid binding"/>
    <property type="evidence" value="ECO:0007669"/>
    <property type="project" value="InterPro"/>
</dbReference>
<dbReference type="GO" id="GO:0004523">
    <property type="term" value="F:RNA-DNA hybrid ribonuclease activity"/>
    <property type="evidence" value="ECO:0007669"/>
    <property type="project" value="UniProtKB-UniRule"/>
</dbReference>
<dbReference type="GO" id="GO:0043137">
    <property type="term" value="P:DNA replication, removal of RNA primer"/>
    <property type="evidence" value="ECO:0007669"/>
    <property type="project" value="TreeGrafter"/>
</dbReference>
<dbReference type="CDD" id="cd09278">
    <property type="entry name" value="RNase_HI_prokaryote_like"/>
    <property type="match status" value="1"/>
</dbReference>
<dbReference type="FunFam" id="3.30.420.10:FF:000008">
    <property type="entry name" value="Ribonuclease H"/>
    <property type="match status" value="1"/>
</dbReference>
<dbReference type="Gene3D" id="3.30.420.10">
    <property type="entry name" value="Ribonuclease H-like superfamily/Ribonuclease H"/>
    <property type="match status" value="1"/>
</dbReference>
<dbReference type="HAMAP" id="MF_00042">
    <property type="entry name" value="RNase_H"/>
    <property type="match status" value="1"/>
</dbReference>
<dbReference type="InterPro" id="IPR050092">
    <property type="entry name" value="RNase_H"/>
</dbReference>
<dbReference type="InterPro" id="IPR012337">
    <property type="entry name" value="RNaseH-like_sf"/>
</dbReference>
<dbReference type="InterPro" id="IPR002156">
    <property type="entry name" value="RNaseH_domain"/>
</dbReference>
<dbReference type="InterPro" id="IPR036397">
    <property type="entry name" value="RNaseH_sf"/>
</dbReference>
<dbReference type="InterPro" id="IPR022892">
    <property type="entry name" value="RNaseHI"/>
</dbReference>
<dbReference type="NCBIfam" id="NF001236">
    <property type="entry name" value="PRK00203.1"/>
    <property type="match status" value="1"/>
</dbReference>
<dbReference type="PANTHER" id="PTHR10642">
    <property type="entry name" value="RIBONUCLEASE H1"/>
    <property type="match status" value="1"/>
</dbReference>
<dbReference type="PANTHER" id="PTHR10642:SF26">
    <property type="entry name" value="RIBONUCLEASE H1"/>
    <property type="match status" value="1"/>
</dbReference>
<dbReference type="Pfam" id="PF00075">
    <property type="entry name" value="RNase_H"/>
    <property type="match status" value="1"/>
</dbReference>
<dbReference type="SUPFAM" id="SSF53098">
    <property type="entry name" value="Ribonuclease H-like"/>
    <property type="match status" value="1"/>
</dbReference>
<dbReference type="PROSITE" id="PS50879">
    <property type="entry name" value="RNASE_H_1"/>
    <property type="match status" value="1"/>
</dbReference>
<keyword id="KW-0963">Cytoplasm</keyword>
<keyword id="KW-0255">Endonuclease</keyword>
<keyword id="KW-0378">Hydrolase</keyword>
<keyword id="KW-0460">Magnesium</keyword>
<keyword id="KW-0479">Metal-binding</keyword>
<keyword id="KW-0540">Nuclease</keyword>
<comment type="function">
    <text evidence="1">Endonuclease that specifically degrades the RNA of RNA-DNA hybrids.</text>
</comment>
<comment type="catalytic activity">
    <reaction evidence="1">
        <text>Endonucleolytic cleavage to 5'-phosphomonoester.</text>
        <dbReference type="EC" id="3.1.26.4"/>
    </reaction>
</comment>
<comment type="cofactor">
    <cofactor evidence="1">
        <name>Mg(2+)</name>
        <dbReference type="ChEBI" id="CHEBI:18420"/>
    </cofactor>
    <text evidence="1">Binds 1 Mg(2+) ion per subunit. May bind a second metal ion at a regulatory site, or after substrate binding.</text>
</comment>
<comment type="subunit">
    <text evidence="1">Monomer.</text>
</comment>
<comment type="subcellular location">
    <subcellularLocation>
        <location evidence="1">Cytoplasm</location>
    </subcellularLocation>
</comment>
<comment type="similarity">
    <text evidence="1">Belongs to the RNase H family.</text>
</comment>
<evidence type="ECO:0000255" key="1">
    <source>
        <dbReference type="HAMAP-Rule" id="MF_00042"/>
    </source>
</evidence>
<evidence type="ECO:0000255" key="2">
    <source>
        <dbReference type="PROSITE-ProRule" id="PRU00408"/>
    </source>
</evidence>
<organism>
    <name type="scientific">Vibrio campbellii (strain ATCC BAA-1116)</name>
    <dbReference type="NCBI Taxonomy" id="2902295"/>
    <lineage>
        <taxon>Bacteria</taxon>
        <taxon>Pseudomonadati</taxon>
        <taxon>Pseudomonadota</taxon>
        <taxon>Gammaproteobacteria</taxon>
        <taxon>Vibrionales</taxon>
        <taxon>Vibrionaceae</taxon>
        <taxon>Vibrio</taxon>
    </lineage>
</organism>